<protein>
    <recommendedName>
        <fullName evidence="1">Membrane protein</fullName>
        <shortName evidence="1">M protein</shortName>
    </recommendedName>
    <alternativeName>
        <fullName evidence="1">E1 glycoprotein</fullName>
    </alternativeName>
    <alternativeName>
        <fullName evidence="1">Matrix glycoprotein</fullName>
    </alternativeName>
    <alternativeName>
        <fullName evidence="1">Membrane glycoprotein</fullName>
    </alternativeName>
</protein>
<accession>Q9JEB4</accession>
<accession>Q9PY97</accession>
<comment type="function">
    <text evidence="1 2">Component of the viral envelope that plays a central role in virus morphogenesis and assembly via its interactions with other viral proteins.</text>
</comment>
<comment type="subunit">
    <text evidence="1 2">Homomultimer. Interacts with envelope E protein in the budding compartment of the host cell, which is located between endoplasmic reticulum and the Golgi complex. Forms a complex with HE and S proteins. Interacts with nucleocapsid N protein. This interaction probably participates in RNA packaging into the virus.</text>
</comment>
<comment type="subcellular location">
    <subcellularLocation>
        <location evidence="1">Virion membrane</location>
        <topology evidence="1">Multi-pass membrane protein</topology>
    </subcellularLocation>
    <subcellularLocation>
        <location evidence="1">Host Golgi apparatus membrane</location>
        <topology evidence="1">Multi-pass membrane protein</topology>
    </subcellularLocation>
    <text evidence="1">Largely embedded in the lipid bilayer.</text>
</comment>
<comment type="similarity">
    <text evidence="1">Belongs to the betacoronaviruses M protein family.</text>
</comment>
<feature type="chain" id="PRO_0000106036" description="Membrane protein">
    <location>
        <begin position="1"/>
        <end position="228"/>
    </location>
</feature>
<feature type="topological domain" description="Virion surface" evidence="1">
    <location>
        <begin position="2"/>
        <end position="25"/>
    </location>
</feature>
<feature type="transmembrane region" description="Helical" evidence="1">
    <location>
        <begin position="26"/>
        <end position="46"/>
    </location>
</feature>
<feature type="topological domain" description="Intravirion" evidence="1">
    <location>
        <begin position="47"/>
        <end position="56"/>
    </location>
</feature>
<feature type="transmembrane region" description="Helical" evidence="1">
    <location>
        <begin position="57"/>
        <end position="77"/>
    </location>
</feature>
<feature type="topological domain" description="Virion surface" evidence="1">
    <location>
        <begin position="78"/>
        <end position="85"/>
    </location>
</feature>
<feature type="transmembrane region" description="Helical" evidence="1">
    <location>
        <begin position="86"/>
        <end position="106"/>
    </location>
</feature>
<feature type="topological domain" description="Intravirion" evidence="1">
    <location>
        <begin position="107"/>
        <end position="228"/>
    </location>
</feature>
<feature type="glycosylation site" description="N-linked (GlcNAc...) asparagine; by host" evidence="3">
    <location>
        <position position="2"/>
    </location>
</feature>
<feature type="sequence conflict" description="In Ref. 2; AAF19388." ref="2">
    <original>N</original>
    <variation>T</variation>
    <location>
        <position position="2"/>
    </location>
</feature>
<feature type="sequence conflict" description="In Ref. 2; AAF19388." ref="2">
    <original>T</original>
    <variation>I</variation>
    <location>
        <position position="128"/>
    </location>
</feature>
<proteinExistence type="evidence at protein level"/>
<reference key="1">
    <citation type="journal article" date="2000" name="Virus Res.">
        <title>Unique N-linked glycosylation of murine coronavirus MHV-2 membrane protein at the conserved O-linked glycosylation site.</title>
        <authorList>
            <person name="Yamada Y.K."/>
            <person name="Yabe M."/>
            <person name="Ohtsuki T."/>
            <person name="Taguchi F."/>
        </authorList>
    </citation>
    <scope>NUCLEOTIDE SEQUENCE [MRNA]</scope>
    <scope>GLYCOSYLATION AT ASN-2</scope>
</reference>
<reference key="2">
    <citation type="journal article" date="2001" name="Exp. Mol. Pathol.">
        <title>Mouse hepatitis virus type-2 infection in mice: an experimental model system of acute meningitis and hepatitis.</title>
        <authorList>
            <person name="Das Sarma J."/>
            <person name="Fu L."/>
            <person name="Hingley S.T."/>
            <person name="Lavi E."/>
        </authorList>
    </citation>
    <scope>NUCLEOTIDE SEQUENCE [MRNA]</scope>
</reference>
<organismHost>
    <name type="scientific">Mus musculus</name>
    <name type="common">Mouse</name>
    <dbReference type="NCBI Taxonomy" id="10090"/>
</organismHost>
<keyword id="KW-0325">Glycoprotein</keyword>
<keyword id="KW-1040">Host Golgi apparatus</keyword>
<keyword id="KW-1043">Host membrane</keyword>
<keyword id="KW-0945">Host-virus interaction</keyword>
<keyword id="KW-0472">Membrane</keyword>
<keyword id="KW-1185">Reference proteome</keyword>
<keyword id="KW-0812">Transmembrane</keyword>
<keyword id="KW-1133">Transmembrane helix</keyword>
<keyword id="KW-0261">Viral envelope protein</keyword>
<keyword id="KW-0899">Viral immunoevasion</keyword>
<keyword id="KW-0468">Viral matrix protein</keyword>
<keyword id="KW-0946">Virion</keyword>
<evidence type="ECO:0000255" key="1">
    <source>
        <dbReference type="HAMAP-Rule" id="MF_04202"/>
    </source>
</evidence>
<evidence type="ECO:0000255" key="2">
    <source>
        <dbReference type="PROSITE-ProRule" id="PRU01275"/>
    </source>
</evidence>
<evidence type="ECO:0000269" key="3">
    <source>
    </source>
</evidence>
<dbReference type="EMBL" id="AF126508">
    <property type="protein sequence ID" value="AAF36439.1"/>
    <property type="molecule type" value="mRNA"/>
</dbReference>
<dbReference type="EMBL" id="AF201929">
    <property type="protein sequence ID" value="AAF19388.1"/>
    <property type="molecule type" value="mRNA"/>
</dbReference>
<dbReference type="SMR" id="Q9JEB4"/>
<dbReference type="GlyCosmos" id="Q9JEB4">
    <property type="glycosylation" value="1 site, No reported glycans"/>
</dbReference>
<dbReference type="iPTMnet" id="Q9JEB4"/>
<dbReference type="Proteomes" id="UP000139707">
    <property type="component" value="Genome"/>
</dbReference>
<dbReference type="GO" id="GO:0044178">
    <property type="term" value="C:host cell Golgi membrane"/>
    <property type="evidence" value="ECO:0007669"/>
    <property type="project" value="UniProtKB-SubCell"/>
</dbReference>
<dbReference type="GO" id="GO:0016020">
    <property type="term" value="C:membrane"/>
    <property type="evidence" value="ECO:0007669"/>
    <property type="project" value="UniProtKB-UniRule"/>
</dbReference>
<dbReference type="GO" id="GO:0019031">
    <property type="term" value="C:viral envelope"/>
    <property type="evidence" value="ECO:0007669"/>
    <property type="project" value="UniProtKB-UniRule"/>
</dbReference>
<dbReference type="GO" id="GO:0055036">
    <property type="term" value="C:virion membrane"/>
    <property type="evidence" value="ECO:0007669"/>
    <property type="project" value="UniProtKB-SubCell"/>
</dbReference>
<dbReference type="GO" id="GO:0039660">
    <property type="term" value="F:structural constituent of virion"/>
    <property type="evidence" value="ECO:0007669"/>
    <property type="project" value="UniProtKB-UniRule"/>
</dbReference>
<dbReference type="CDD" id="cd21568">
    <property type="entry name" value="HCoV-like_M"/>
    <property type="match status" value="1"/>
</dbReference>
<dbReference type="HAMAP" id="MF_04202">
    <property type="entry name" value="BETA_CORONA_M"/>
    <property type="match status" value="1"/>
</dbReference>
<dbReference type="InterPro" id="IPR002574">
    <property type="entry name" value="M_CoV"/>
</dbReference>
<dbReference type="InterPro" id="IPR044362">
    <property type="entry name" value="M_HCoV-like"/>
</dbReference>
<dbReference type="Pfam" id="PF01635">
    <property type="entry name" value="CoV_M"/>
    <property type="match status" value="1"/>
</dbReference>
<dbReference type="PROSITE" id="PS51927">
    <property type="entry name" value="COV_M"/>
    <property type="match status" value="1"/>
</dbReference>
<sequence>MNSTTQAPQPVYQWTADEAIRFLKEWNFSLGIILLFVTIILQFGYTSRSMFVYVVKMILLWLMWPLTIVLCIFNCVYALNNVYLGFSIVFTIVSIIMWIMYFVNSIRLFIRTGSWWSFNPETNNLMCTDMKGTVYVRPIIEDYHTLTATIIRGHLYMQGVKLGTGFSLSDLPAYVTVAKVSHLCTYKRAFLDKVDGVSGFAVYVKSKVGNYRLPSNKPSGMDTALLRI</sequence>
<organism>
    <name type="scientific">Murine coronavirus (strain 2)</name>
    <name type="common">MHV-2</name>
    <name type="synonym">Murine hepatitis virus</name>
    <dbReference type="NCBI Taxonomy" id="76344"/>
    <lineage>
        <taxon>Viruses</taxon>
        <taxon>Riboviria</taxon>
        <taxon>Orthornavirae</taxon>
        <taxon>Pisuviricota</taxon>
        <taxon>Pisoniviricetes</taxon>
        <taxon>Nidovirales</taxon>
        <taxon>Cornidovirineae</taxon>
        <taxon>Coronaviridae</taxon>
        <taxon>Orthocoronavirinae</taxon>
        <taxon>Betacoronavirus</taxon>
        <taxon>Embecovirus</taxon>
        <taxon>Murine coronavirus</taxon>
    </lineage>
</organism>
<name>VME1_CVM2</name>
<gene>
    <name evidence="1" type="primary">M</name>
    <name type="ORF">6</name>
</gene>